<keyword id="KW-0002">3D-structure</keyword>
<keyword id="KW-0067">ATP-binding</keyword>
<keyword id="KW-0167">Capsid protein</keyword>
<keyword id="KW-0191">Covalent protein-RNA linkage</keyword>
<keyword id="KW-1139">Helical capsid protein</keyword>
<keyword id="KW-0347">Helicase</keyword>
<keyword id="KW-1035">Host cytoplasm</keyword>
<keyword id="KW-1036">Host cytoplasmic vesicle</keyword>
<keyword id="KW-1043">Host membrane</keyword>
<keyword id="KW-1048">Host nucleus</keyword>
<keyword id="KW-0945">Host-virus interaction</keyword>
<keyword id="KW-0378">Hydrolase</keyword>
<keyword id="KW-1090">Inhibition of host innate immune response by virus</keyword>
<keyword id="KW-0472">Membrane</keyword>
<keyword id="KW-0547">Nucleotide-binding</keyword>
<keyword id="KW-0548">Nucleotidyltransferase</keyword>
<keyword id="KW-0597">Phosphoprotein</keyword>
<keyword id="KW-0645">Protease</keyword>
<keyword id="KW-1185">Reference proteome</keyword>
<keyword id="KW-0688">Ribosomal frameshifting</keyword>
<keyword id="KW-0696">RNA-directed RNA polymerase</keyword>
<keyword id="KW-0720">Serine protease</keyword>
<keyword id="KW-0941">Suppressor of RNA silencing</keyword>
<keyword id="KW-0788">Thiol protease</keyword>
<keyword id="KW-0808">Transferase</keyword>
<keyword id="KW-0812">Transmembrane</keyword>
<keyword id="KW-1133">Transmembrane helix</keyword>
<keyword id="KW-0899">Viral immunoevasion</keyword>
<keyword id="KW-0693">Viral RNA replication</keyword>
<keyword id="KW-0946">Virion</keyword>
<name>POLG_TUMVJ</name>
<sequence length="3164" mass="357480">MAAVTFASAITNAITSKPALTGMVQFGSFPPMPLRSTTVTTVATSVAQPKLYTVQFGSLDPVVVKSGAGSLAKATRQQPNVEIDVSLSEAAALEVAKPRSNAVLRMHEEANKERALFLDWEASLKRSSYGIAEDEKVVMTTHGVSKIVPRSSRAMKLKRARERRRAQQPIILKWEPKLSGISIGGGLSASVIEAEEVRTKWPLHKTPSMKKRTVHRICKMNDQGVDMLTRSLVKIFKTKSANIEYIGKKSIKVDFIRKERTKFARIQVAHLLGKRAQRDLLTGMEENHFIDILSKYSGNKTTINPGVVCAGWSGIVVGNGILTQKRSRSPSEAFVIRGEHEGKLYDARIKVTRTMSHKIVHFSAAGANFWKGFDRCFLAYRSDNREHTCYSGLDVTECGEVAALMCLAMFPCGKITCPDCVTDSELSQGQASGPSMKHRLTQLRDVIKSSYPRFKHAVQILDRYEQSLSSANENYQDFAEIQSISDGVEKAAFPHVNKLNAILIKGATVTGEEFSQATKHLLEIARYLKNRTENIEKGSLKSFRNKISQKAHINPTLMCDNQLDRNGNFIWGERGYHAKRFFSNYFEIIDPKKGYTQYETRAVPNGSRKLAIGKLIVPTNFEVLREQMKGEPVEPYPVTVECVSKLQGDFVHACCCVTTESGDPVLSEIKMPTKHHLVIGNSGDPKYIDLPEIEENKMYIAKEGYCYINIFLAMLVNVKESQAKEFTKVVRDKLVGELGKWPTLLDVATACYFLKVFYPDVANAELPRMLVDHKTKIIHVVDSYGSLSTGYHVLKTNTVEQLIKFTRCNLESSLKHYRVGGTEWEDTHGSSNIDNPQWCIKRLIKGVYKPKQLKEDMLANPFLPLYALLSPGVILAFYNSGSLEYLMNHYIRVDSNVAVLLVVLKSLAKKVSTSQSVLAQLQIIERSLPELIEAKANVNGPDDAATRACNRFMGMLLHMAEPNWELADGGYTILRDHSISILEKSYLQILDEAWNELSWSERCAIRYYSSKQAIFTQKDLPMKSEADLGGRYSVSVMSSYERSKQCMKSVHSSIGNRLRSSMSWTSSKVSNSVCRTINYLVPDVFKFMNVLVCISLLIKMTAEANHIVTTQRRLKLDVEETERRKIEWELAFHHAILTQSAGQHPTIDEFRAYIADKAPHLSEHIEPEEKAVVHQAKRQSEQELERIIAFVALVLMMFDAERSDCVTKILNKLKGLVATVEPTVYHQTLNDIEDDLSERNLFVDFELSSDGDMLQQLPAEKTFASWWSHQLSRGFTIPHYRTEGKFMTFTRATATEVAGKIAHESDKDILLMGAVGSGKSTGLPYHLSRKGNVLLLEPTRPLAENVHKQLSQAPFHQNTTLRMRGLTAFGSAPISVMTSGFALNYFANNRMRIEEFDFVIFDECHVHDANAMAMRCLLHECDYSGKIIKVSATPPGREVEFSTQYPVSISTEDTLSFQDFVNAQGSGSNCDVISKGDNILVYVASYNEVDALSKLLIERDFKVTKVDGRTMKVGNIEITTSGTPSKKHFIVATNIIENGVTLDIDVVADFGTKVLPYLDTDSRMLSTTKTSINYGERIQRLGRVGRHKPGHALRIGHTEKGLSEVPSCIATEAALKCFTYGLPVITNNVSTSILGNVTVKQARTMSVFEITPFYTSQVVRYDGSMHPQVHALLKRFKLRDSEIVLNKLAIPHRGVNAWLTASEYARLGANVEDRRDVRIPFMCRDIPEKLHLDMWDVIVKFKGDAGFGRLSSASASKVAYTLQTDVNSIQRTVTIIDTLIAEERRKQEYFKTVTSNCVSSSNFSLQSITNAIKSRMMKDHTCENISVLEGAKSQLLEFRNLNADHSFATKTDGISRHFMSEYGALEAVHHQNTSDMSKFLKLKGKWNKTLITRDVLVLCGVLGGGLWMVIQHLRSKMSEPVTHEAKGKRQRQKLKFRNARDNKMGREVYGDDDTIEHFFGDAYTKKGKSKGRTRGIGHKNRKFINMYGFDPEDFSAVRFVDPLTGATLDDNPLTDITLVQEHFGNIRMDLLGEDELDSNEIRVNKTIQAYYMNNKTGKALKVDLTPHIPLKVCDLHATIAGFPERENELRQTGKAQPINIDEVPRANNELVPVDHESNSMFRGLRDYNPISNNICHLTNVSDGASNSLYGVGFGPLILTNRHLFERNNGELVIKSRHGEFVIKNTTQLHLLPIPDRDLLLIRLPKDVPPFPQKLGFRQPEKGERICMVGSNFQTKSITSIVSETSTIMPVENSQFWKHWISTKDGQCGSPMVSTKDGKILGLHSLANFQNSINYFAAFPDDFAEKYLHTIEAHEWVKHWKYNTSAISWGSLNIQASQPSGLFKVSKLISDLDSTAVYAQTQQNRWMFEQLNGNLKAIAHCPSQLVTKHTVKGKCQMFDLYLKLHDEAREYFQPMLGQYQKSKLNREAYAKDLLKYATPIEAGNIDCDLFEKTVEIVVSDLRGYGFETCNYVTDENDIFEALNMKSAVGALYKGKKKDYFAEFTPEMKEEILKQSCERLFLGKMGVWNGSLKAELRPLEKVEANKTRTFTAAPLDTLLGGKVCVDDFNNQFYDHNLRAPWSVGMTKFYCGWDRLLESLPDGWVYCDADGSQFDSSLSPYLINAVLNIRLGFMEEWDIGEVMLRNLYTEIVYTPISTPDGTLVKKFKGNNSGQPSTVVDNTLMVILAVNYSLKKSGIPSELRDSIIRFFVNGDDLLLSVHPEYEYILDTMADNFRELGLKYTFDSRTREKGDLWFMSHQGHKREGIWIPKLEPERIVSILEWDRSKEPCHRLEAICAAMIESWGYDKLTHEIRKFYAWMIEQAPFSSLAQEGKAPYIAETALRKLYLDKEPAQEDLTHYLQAIFEDYEDGAEACVYHQAGETLDAGLTDEQKQAEKEKKEREKAEKERERQKQLALKKGKDVAQEEGKRDKEVNAGTSGTFSVPRLKSLTSKMRVPRYEKRVALNLDHLILYTPEQTDLSNTRSTRKQFDTWFEGVMADYELTEDKMQIILNGLMVWCIENGTSPNINGMWVMMDGDDQVEFPIKPLIDHAKPTFRQIMAHFSDVAEAYIEKRNQDRPYMPRYGLQRNLTDMSLARYAFDFYEMTSRTPIRAREAHIQMKAAALRGANNNLFGLDGNVGTTVENTERHTTEDVNRNMHNLLGVQGL</sequence>
<dbReference type="EC" id="3.4.21.-"/>
<dbReference type="EC" id="3.4.22.45" evidence="2 13"/>
<dbReference type="EC" id="3.6.4.-"/>
<dbReference type="EC" id="3.4.22.44"/>
<dbReference type="EC" id="2.7.7.48" evidence="9"/>
<dbReference type="EMBL" id="D83184">
    <property type="protein sequence ID" value="BAA11836.1"/>
    <property type="molecule type" value="Genomic_RNA"/>
</dbReference>
<dbReference type="EMBL" id="AF169561">
    <property type="protein sequence ID" value="AAF89676.2"/>
    <property type="molecule type" value="Genomic_RNA"/>
</dbReference>
<dbReference type="PIR" id="A48347">
    <property type="entry name" value="A48347"/>
</dbReference>
<dbReference type="PIR" id="PQ0757">
    <property type="entry name" value="PQ0757"/>
</dbReference>
<dbReference type="PIR" id="PQ0759">
    <property type="entry name" value="PQ0759"/>
</dbReference>
<dbReference type="PIR" id="S21499">
    <property type="entry name" value="S21499"/>
</dbReference>
<dbReference type="RefSeq" id="NP_062866.2">
    <molecule id="P89509-1"/>
    <property type="nucleotide sequence ID" value="NC_002509.2"/>
</dbReference>
<dbReference type="PDB" id="3RNV">
    <property type="method" value="X-ray"/>
    <property type="resolution" value="2.00 A"/>
    <property type="chains" value="A=663-820"/>
</dbReference>
<dbReference type="PDBsum" id="3RNV"/>
<dbReference type="SMR" id="P89509"/>
<dbReference type="MEROPS" id="C04.001"/>
<dbReference type="GeneID" id="1494058"/>
<dbReference type="KEGG" id="vg:1494058"/>
<dbReference type="EvolutionaryTrace" id="P89509"/>
<dbReference type="Proteomes" id="UP000008262">
    <property type="component" value="Genome"/>
</dbReference>
<dbReference type="Proteomes" id="UP000201106">
    <property type="component" value="Segment"/>
</dbReference>
<dbReference type="GO" id="GO:0019029">
    <property type="term" value="C:helical viral capsid"/>
    <property type="evidence" value="ECO:0007669"/>
    <property type="project" value="UniProtKB-KW"/>
</dbReference>
<dbReference type="GO" id="GO:0044161">
    <property type="term" value="C:host cell cytoplasmic vesicle"/>
    <property type="evidence" value="ECO:0007669"/>
    <property type="project" value="UniProtKB-SubCell"/>
</dbReference>
<dbReference type="GO" id="GO:0033644">
    <property type="term" value="C:host cell membrane"/>
    <property type="evidence" value="ECO:0007669"/>
    <property type="project" value="UniProtKB-SubCell"/>
</dbReference>
<dbReference type="GO" id="GO:0042025">
    <property type="term" value="C:host cell nucleus"/>
    <property type="evidence" value="ECO:0007669"/>
    <property type="project" value="UniProtKB-SubCell"/>
</dbReference>
<dbReference type="GO" id="GO:0016020">
    <property type="term" value="C:membrane"/>
    <property type="evidence" value="ECO:0007669"/>
    <property type="project" value="UniProtKB-KW"/>
</dbReference>
<dbReference type="GO" id="GO:0005524">
    <property type="term" value="F:ATP binding"/>
    <property type="evidence" value="ECO:0007669"/>
    <property type="project" value="UniProtKB-KW"/>
</dbReference>
<dbReference type="GO" id="GO:0004197">
    <property type="term" value="F:cysteine-type endopeptidase activity"/>
    <property type="evidence" value="ECO:0007669"/>
    <property type="project" value="InterPro"/>
</dbReference>
<dbReference type="GO" id="GO:0004386">
    <property type="term" value="F:helicase activity"/>
    <property type="evidence" value="ECO:0007669"/>
    <property type="project" value="UniProtKB-KW"/>
</dbReference>
<dbReference type="GO" id="GO:0016818">
    <property type="term" value="F:hydrolase activity, acting on acid anhydrides, in phosphorus-containing anhydrides"/>
    <property type="evidence" value="ECO:0007669"/>
    <property type="project" value="InterPro"/>
</dbReference>
<dbReference type="GO" id="GO:0003723">
    <property type="term" value="F:RNA binding"/>
    <property type="evidence" value="ECO:0007669"/>
    <property type="project" value="InterPro"/>
</dbReference>
<dbReference type="GO" id="GO:0003968">
    <property type="term" value="F:RNA-directed RNA polymerase activity"/>
    <property type="evidence" value="ECO:0007669"/>
    <property type="project" value="UniProtKB-KW"/>
</dbReference>
<dbReference type="GO" id="GO:0008236">
    <property type="term" value="F:serine-type peptidase activity"/>
    <property type="evidence" value="ECO:0007669"/>
    <property type="project" value="UniProtKB-KW"/>
</dbReference>
<dbReference type="GO" id="GO:0005198">
    <property type="term" value="F:structural molecule activity"/>
    <property type="evidence" value="ECO:0007669"/>
    <property type="project" value="InterPro"/>
</dbReference>
<dbReference type="GO" id="GO:0006351">
    <property type="term" value="P:DNA-templated transcription"/>
    <property type="evidence" value="ECO:0007669"/>
    <property type="project" value="InterPro"/>
</dbReference>
<dbReference type="GO" id="GO:0039690">
    <property type="term" value="P:positive stranded viral RNA replication"/>
    <property type="evidence" value="ECO:0000315"/>
    <property type="project" value="CACAO"/>
</dbReference>
<dbReference type="GO" id="GO:0006508">
    <property type="term" value="P:proteolysis"/>
    <property type="evidence" value="ECO:0007669"/>
    <property type="project" value="UniProtKB-KW"/>
</dbReference>
<dbReference type="GO" id="GO:0052170">
    <property type="term" value="P:symbiont-mediated suppression of host innate immune response"/>
    <property type="evidence" value="ECO:0007669"/>
    <property type="project" value="UniProtKB-KW"/>
</dbReference>
<dbReference type="GO" id="GO:0075523">
    <property type="term" value="P:viral translational frameshifting"/>
    <property type="evidence" value="ECO:0007669"/>
    <property type="project" value="UniProtKB-KW"/>
</dbReference>
<dbReference type="CDD" id="cd23175">
    <property type="entry name" value="ps-ssRNAv_Potyviridae_RdRp"/>
    <property type="match status" value="1"/>
</dbReference>
<dbReference type="Gene3D" id="3.30.70.270">
    <property type="match status" value="1"/>
</dbReference>
<dbReference type="Gene3D" id="3.90.70.150">
    <property type="entry name" value="Helper component proteinase"/>
    <property type="match status" value="1"/>
</dbReference>
<dbReference type="Gene3D" id="3.40.50.300">
    <property type="entry name" value="P-loop containing nucleotide triphosphate hydrolases"/>
    <property type="match status" value="2"/>
</dbReference>
<dbReference type="Gene3D" id="2.40.10.10">
    <property type="entry name" value="Trypsin-like serine proteases"/>
    <property type="match status" value="2"/>
</dbReference>
<dbReference type="InterPro" id="IPR011545">
    <property type="entry name" value="DEAD/DEAH_box_helicase_dom"/>
</dbReference>
<dbReference type="InterPro" id="IPR043502">
    <property type="entry name" value="DNA/RNA_pol_sf"/>
</dbReference>
<dbReference type="InterPro" id="IPR001456">
    <property type="entry name" value="HC-pro"/>
</dbReference>
<dbReference type="InterPro" id="IPR031159">
    <property type="entry name" value="HC_PRO_CPD_dom"/>
</dbReference>
<dbReference type="InterPro" id="IPR042308">
    <property type="entry name" value="HC_PRO_CPD_sf"/>
</dbReference>
<dbReference type="InterPro" id="IPR014001">
    <property type="entry name" value="Helicase_ATP-bd"/>
</dbReference>
<dbReference type="InterPro" id="IPR001650">
    <property type="entry name" value="Helicase_C-like"/>
</dbReference>
<dbReference type="InterPro" id="IPR027417">
    <property type="entry name" value="P-loop_NTPase"/>
</dbReference>
<dbReference type="InterPro" id="IPR002540">
    <property type="entry name" value="Pept_S30_P1_potyvir"/>
</dbReference>
<dbReference type="InterPro" id="IPR009003">
    <property type="entry name" value="Peptidase_S1_PA"/>
</dbReference>
<dbReference type="InterPro" id="IPR043504">
    <property type="entry name" value="Peptidase_S1_PA_chymotrypsin"/>
</dbReference>
<dbReference type="InterPro" id="IPR001592">
    <property type="entry name" value="Poty_coat"/>
</dbReference>
<dbReference type="InterPro" id="IPR001730">
    <property type="entry name" value="Potyv_NIa-pro_dom"/>
</dbReference>
<dbReference type="InterPro" id="IPR039560">
    <property type="entry name" value="Potyvirid-P3"/>
</dbReference>
<dbReference type="InterPro" id="IPR013648">
    <property type="entry name" value="PP_Potyviridae"/>
</dbReference>
<dbReference type="InterPro" id="IPR043128">
    <property type="entry name" value="Rev_trsase/Diguanyl_cyclase"/>
</dbReference>
<dbReference type="InterPro" id="IPR001205">
    <property type="entry name" value="RNA-dir_pol_C"/>
</dbReference>
<dbReference type="InterPro" id="IPR007094">
    <property type="entry name" value="RNA-dir_pol_PSvirus"/>
</dbReference>
<dbReference type="PANTHER" id="PTHR43519">
    <property type="entry name" value="ATP-DEPENDENT RNA HELICASE HRPB"/>
    <property type="match status" value="1"/>
</dbReference>
<dbReference type="PANTHER" id="PTHR43519:SF1">
    <property type="entry name" value="ATP-DEPENDENT RNA HELICASE HRPB"/>
    <property type="match status" value="1"/>
</dbReference>
<dbReference type="Pfam" id="PF00270">
    <property type="entry name" value="DEAD"/>
    <property type="match status" value="1"/>
</dbReference>
<dbReference type="Pfam" id="PF00271">
    <property type="entry name" value="Helicase_C"/>
    <property type="match status" value="1"/>
</dbReference>
<dbReference type="Pfam" id="PF00863">
    <property type="entry name" value="Peptidase_C4"/>
    <property type="match status" value="1"/>
</dbReference>
<dbReference type="Pfam" id="PF00851">
    <property type="entry name" value="Peptidase_C6"/>
    <property type="match status" value="1"/>
</dbReference>
<dbReference type="Pfam" id="PF01577">
    <property type="entry name" value="Peptidase_S30"/>
    <property type="match status" value="1"/>
</dbReference>
<dbReference type="Pfam" id="PF00767">
    <property type="entry name" value="Poty_coat"/>
    <property type="match status" value="1"/>
</dbReference>
<dbReference type="Pfam" id="PF08440">
    <property type="entry name" value="Poty_PP"/>
    <property type="match status" value="1"/>
</dbReference>
<dbReference type="Pfam" id="PF13608">
    <property type="entry name" value="Potyvirid-P3"/>
    <property type="match status" value="1"/>
</dbReference>
<dbReference type="Pfam" id="PF00680">
    <property type="entry name" value="RdRP_1"/>
    <property type="match status" value="1"/>
</dbReference>
<dbReference type="PRINTS" id="PR00966">
    <property type="entry name" value="NIAPOTYPTASE"/>
</dbReference>
<dbReference type="SMART" id="SM00487">
    <property type="entry name" value="DEXDc"/>
    <property type="match status" value="1"/>
</dbReference>
<dbReference type="SMART" id="SM00490">
    <property type="entry name" value="HELICc"/>
    <property type="match status" value="1"/>
</dbReference>
<dbReference type="SUPFAM" id="SSF56672">
    <property type="entry name" value="DNA/RNA polymerases"/>
    <property type="match status" value="1"/>
</dbReference>
<dbReference type="SUPFAM" id="SSF52540">
    <property type="entry name" value="P-loop containing nucleoside triphosphate hydrolases"/>
    <property type="match status" value="2"/>
</dbReference>
<dbReference type="SUPFAM" id="SSF50494">
    <property type="entry name" value="Trypsin-like serine proteases"/>
    <property type="match status" value="1"/>
</dbReference>
<dbReference type="PROSITE" id="PS51744">
    <property type="entry name" value="HC_PRO_CPD"/>
    <property type="match status" value="1"/>
</dbReference>
<dbReference type="PROSITE" id="PS51192">
    <property type="entry name" value="HELICASE_ATP_BIND_1"/>
    <property type="match status" value="1"/>
</dbReference>
<dbReference type="PROSITE" id="PS51194">
    <property type="entry name" value="HELICASE_CTER"/>
    <property type="match status" value="1"/>
</dbReference>
<dbReference type="PROSITE" id="PS51436">
    <property type="entry name" value="POTYVIRUS_NIA_PRO"/>
    <property type="match status" value="1"/>
</dbReference>
<dbReference type="PROSITE" id="PS51871">
    <property type="entry name" value="PV_P1_PRO"/>
    <property type="match status" value="1"/>
</dbReference>
<dbReference type="PROSITE" id="PS50507">
    <property type="entry name" value="RDRP_SSRNA_POS"/>
    <property type="match status" value="1"/>
</dbReference>
<evidence type="ECO:0000250" key="1"/>
<evidence type="ECO:0000250" key="2">
    <source>
        <dbReference type="UniProtKB" id="P04517"/>
    </source>
</evidence>
<evidence type="ECO:0000250" key="3">
    <source>
        <dbReference type="UniProtKB" id="P09814"/>
    </source>
</evidence>
<evidence type="ECO:0000250" key="4">
    <source>
        <dbReference type="UniProtKB" id="P13529"/>
    </source>
</evidence>
<evidence type="ECO:0000250" key="5">
    <source>
        <dbReference type="UniProtKB" id="P17767"/>
    </source>
</evidence>
<evidence type="ECO:0000250" key="6">
    <source>
        <dbReference type="UniProtKB" id="P18247"/>
    </source>
</evidence>
<evidence type="ECO:0000250" key="7">
    <source>
        <dbReference type="UniProtKB" id="P21231"/>
    </source>
</evidence>
<evidence type="ECO:0000255" key="8"/>
<evidence type="ECO:0000255" key="9">
    <source>
        <dbReference type="PROSITE-ProRule" id="PRU00539"/>
    </source>
</evidence>
<evidence type="ECO:0000255" key="10">
    <source>
        <dbReference type="PROSITE-ProRule" id="PRU00541"/>
    </source>
</evidence>
<evidence type="ECO:0000255" key="11">
    <source>
        <dbReference type="PROSITE-ProRule" id="PRU00542"/>
    </source>
</evidence>
<evidence type="ECO:0000255" key="12">
    <source>
        <dbReference type="PROSITE-ProRule" id="PRU00766"/>
    </source>
</evidence>
<evidence type="ECO:0000255" key="13">
    <source>
        <dbReference type="PROSITE-ProRule" id="PRU01080"/>
    </source>
</evidence>
<evidence type="ECO:0000255" key="14">
    <source>
        <dbReference type="PROSITE-ProRule" id="PRU01219"/>
    </source>
</evidence>
<evidence type="ECO:0000256" key="15">
    <source>
        <dbReference type="SAM" id="MobiDB-lite"/>
    </source>
</evidence>
<evidence type="ECO:0000269" key="16">
    <source>
    </source>
</evidence>
<evidence type="ECO:0000269" key="17">
    <source>
    </source>
</evidence>
<evidence type="ECO:0000305" key="18"/>
<evidence type="ECO:0000305" key="19">
    <source>
    </source>
</evidence>
<evidence type="ECO:0000305" key="20">
    <source>
    </source>
</evidence>
<evidence type="ECO:0007744" key="21">
    <source>
        <dbReference type="PDB" id="3RNV"/>
    </source>
</evidence>
<evidence type="ECO:0007829" key="22">
    <source>
        <dbReference type="PDB" id="3RNV"/>
    </source>
</evidence>
<organism>
    <name type="scientific">Turnip mosaic virus (strain Japanese)</name>
    <name type="common">TuMV</name>
    <dbReference type="NCBI Taxonomy" id="12230"/>
    <lineage>
        <taxon>Viruses</taxon>
        <taxon>Riboviria</taxon>
        <taxon>Orthornavirae</taxon>
        <taxon>Pisuviricota</taxon>
        <taxon>Stelpaviricetes</taxon>
        <taxon>Patatavirales</taxon>
        <taxon>Potyviridae</taxon>
        <taxon>Potyvirus</taxon>
        <taxon>Potyvirus rapae</taxon>
    </lineage>
</organism>
<organismHost>
    <name type="scientific">Alliaria petiolata</name>
    <name type="common">Garlic mustard</name>
    <name type="synonym">Arabis petiolata</name>
    <dbReference type="NCBI Taxonomy" id="126270"/>
</organismHost>
<organismHost>
    <name type="scientific">Brassica</name>
    <dbReference type="NCBI Taxonomy" id="3705"/>
</organismHost>
<organismHost>
    <name type="scientific">Calanthe</name>
    <dbReference type="NCBI Taxonomy" id="38206"/>
</organismHost>
<organismHost>
    <name type="scientific">Capsella bursa-pastoris</name>
    <name type="common">Shepherd's purse</name>
    <name type="synonym">Thlaspi bursa-pastoris</name>
    <dbReference type="NCBI Taxonomy" id="3719"/>
</organismHost>
<organismHost>
    <name type="scientific">Hesperis matronalis</name>
    <dbReference type="NCBI Taxonomy" id="264418"/>
</organismHost>
<organismHost>
    <name type="scientific">Stellaria media</name>
    <name type="common">Common chickweed</name>
    <name type="synonym">Alsine media</name>
    <dbReference type="NCBI Taxonomy" id="13274"/>
</organismHost>
<organismHost>
    <name type="scientific">Trifolium hybridum</name>
    <name type="common">Alsike clover</name>
    <dbReference type="NCBI Taxonomy" id="74517"/>
</organismHost>
<accession>P89509</accession>
<accession>Q9ICI2</accession>
<comment type="function">
    <molecule>Helper component proteinase</molecule>
    <text evidence="2 13">Cysteine protease that cleaves a Gly-Gly dipeptide at its own C-terminus (By similarity). Required for aphid transmission and also has proteolytic activity (By similarity). Interacts with virions and aphid stylets (By similarity). Acts as a suppressor of RNA-mediated gene silencing, also known as post-transcriptional gene silencing (PTGS), a mechanism of plant viral defense that limits the accumulation of viral RNAs (By similarity). May have RNA-binding activity (By similarity).</text>
</comment>
<comment type="function">
    <molecule>Cytoplasmic inclusion protein</molecule>
    <text>Has helicase activity. It may be involved in replication.</text>
</comment>
<comment type="function">
    <molecule>6 kDa protein 1</molecule>
    <text evidence="4 17">Indispensable for virus replication (By similarity). Reduces the abundance of host transcripts related to jasmonic acid biosynthesis therefore altering the host defenses (PubMed:35746814). In order to increase its own stability, decreases host protein degradation pathways (PubMed:35746814).</text>
</comment>
<comment type="function">
    <molecule>6 kDa protein 2</molecule>
    <text evidence="16">Responsible for the formation of peripheral motile host endoplasmic reticulum (ER)-derived viral vesicles called 'viral factories', seat of the viral RNA (vRNA) replication and carrying vRNA to plasmodesmata for delivery into adjacent non-infected cells; this process relies on host Sec24a-binding.</text>
</comment>
<comment type="function">
    <molecule>Viral genome-linked protein</molecule>
    <text evidence="6">Mediates the cap-independent, EIF4E-dependent translation of viral genomic RNAs (By similarity). Binds to the cap-binding site of host EIF4E and thus interferes with the host EIF4E-dependent mRNA export and translation (By similarity). VPg-RNA directly binds EIF4E and is a template for transcription (By similarity). Also forms trimeric complexes with EIF4E-EIF4G, which are templates for translation (By similarity).</text>
</comment>
<comment type="function">
    <molecule>Nuclear inclusion protein A</molecule>
    <text evidence="2">Has RNA-binding and proteolytic activities.</text>
</comment>
<comment type="function">
    <molecule>Nuclear inclusion protein B</molecule>
    <text evidence="16">RNA-dependent RNA polymerase that ensures transcription and replication of viral RNA (vRNA).</text>
</comment>
<comment type="function">
    <molecule>Capsid protein</molecule>
    <text evidence="2">Involved in aphid transmission, cell-to-cell and systemis movement, encapsidation of the viral RNA and in the regulation of viral RNA amplification.</text>
</comment>
<comment type="catalytic activity">
    <molecule>Nuclear inclusion protein B</molecule>
    <reaction evidence="9">
        <text>RNA(n) + a ribonucleoside 5'-triphosphate = RNA(n+1) + diphosphate</text>
        <dbReference type="Rhea" id="RHEA:21248"/>
        <dbReference type="Rhea" id="RHEA-COMP:14527"/>
        <dbReference type="Rhea" id="RHEA-COMP:17342"/>
        <dbReference type="ChEBI" id="CHEBI:33019"/>
        <dbReference type="ChEBI" id="CHEBI:61557"/>
        <dbReference type="ChEBI" id="CHEBI:140395"/>
        <dbReference type="EC" id="2.7.7.48"/>
    </reaction>
</comment>
<comment type="catalytic activity">
    <molecule>Nuclear inclusion protein A</molecule>
    <reaction evidence="2">
        <text>Hydrolyzes glutaminyl bonds, and activity is further restricted by preferences for the amino acids in P6 - P1' that vary with the species of potyvirus, e.g. Glu-Xaa-Xaa-Tyr-Xaa-Gln-|-(Ser or Gly) for the enzyme from tobacco etch virus. The natural substrate is the viral polyprotein, but other proteins and oligopeptides containing the appropriate consensus sequence are also cleaved.</text>
        <dbReference type="EC" id="3.4.22.44"/>
    </reaction>
</comment>
<comment type="catalytic activity">
    <molecule>Helper component proteinase</molecule>
    <reaction evidence="2">
        <text>Hydrolyzes a Gly-|-Gly bond at its own C-terminus, commonly in the sequence -Tyr-Xaa-Val-Gly-|-Gly, in the processing of the potyviral polyprotein.</text>
        <dbReference type="EC" id="3.4.22.45"/>
    </reaction>
</comment>
<comment type="subunit">
    <molecule>Viral genome-linked protein</molecule>
    <text evidence="6">Interacts with host eIF4E protein (via cap-binding region); this interaction mediates the translation of the VPg-viral RNA conjugates (By similarity). Part of a complex that comprises VPg, RNA, host EIF4E and EIF4G; this interaction mediates the translation of the VPg-viral RNA conjugates (By similarity).</text>
</comment>
<comment type="subunit">
    <molecule>6 kDa protein 2</molecule>
    <text evidence="16">Interacts, via N-terminal region, with host Sec24a protein in COPII-coated vesicles (PubMed:25878114). This binding triggers the formation of host endoplasmic reticulum (ER)-derived viral vesicles involved in cell-to-cell viral movement (PubMed:25878114).</text>
</comment>
<comment type="subcellular location">
    <molecule>6 kDa protein 1</molecule>
    <subcellularLocation>
        <location evidence="16">Host cytoplasm</location>
    </subcellularLocation>
    <subcellularLocation>
        <location evidence="16">Host nucleus</location>
    </subcellularLocation>
    <subcellularLocation>
        <location evidence="4">Host cytoplasmic vesicle</location>
    </subcellularLocation>
    <text evidence="4">Probably colocalizes with 6K2-induced vesicles associated with host chloroplasts.</text>
</comment>
<comment type="subcellular location">
    <molecule>6 kDa protein 2</molecule>
    <subcellularLocation>
        <location evidence="16">Host cytoplasmic vesicle</location>
    </subcellularLocation>
    <subcellularLocation>
        <location evidence="16">Host membrane</location>
    </subcellularLocation>
    <text evidence="3">6K-induced vesicles associate with host chloroplasts.</text>
</comment>
<comment type="subcellular location">
    <molecule>Viral genome-linked protein</molecule>
    <subcellularLocation>
        <location evidence="7">Host nucleus</location>
    </subcellularLocation>
    <text evidence="7">Binds to host plant eIF4E proteins in the host nucleus.</text>
</comment>
<comment type="subcellular location">
    <molecule>Capsid protein</molecule>
    <subcellularLocation>
        <location evidence="18">Virion</location>
    </subcellularLocation>
</comment>
<comment type="alternative products">
    <event type="ribosomal frameshifting"/>
    <isoform>
        <id>P89509-1</id>
        <name>Genome polyprotein</name>
        <sequence type="displayed"/>
    </isoform>
    <isoform>
        <id>P0CK11-1</id>
        <name>P3N-PIPO polyprotein</name>
        <sequence type="external"/>
    </isoform>
</comment>
<comment type="domain">
    <molecule>Helper component proteinase</molecule>
    <text>The N-terminus is involved in interaction with stylets. The central part is involved in interaction with virions and the C-terminus is involved in cell-to cell movement of the virus.</text>
</comment>
<comment type="PTM">
    <molecule>Viral genome-linked protein</molecule>
    <text evidence="3">VPg is uridylylated by the polymerase and is covalently attached to the 5'-end of the genomic RNA. This uridylylated form acts as a nucleotide-peptide primer for the polymerase (By similarity).</text>
</comment>
<comment type="PTM">
    <molecule>Genome polyprotein</molecule>
    <text evidence="1">Potyviral RNA is expressed as two polyproteins which undergo post-translational proteolytic processing. Genome polyprotein is processed by NIa-pro, P1 and HC-pro proteinases resulting in the production of at least ten individual proteins. P3N-PIPO polyprotein is cleaved by P1 and HC-pro proteinases resulting in the production of three individual proteins. The P1 proteinase and the HC-pro cleave only their respective C-termini autocatalytically. 6K1 is essential for proper proteolytic separation of P3 from CI (By similarity).</text>
</comment>
<comment type="miscellaneous">
    <molecule>Isoform Genome polyprotein</molecule>
    <text>Produced by conventional translation.</text>
</comment>
<comment type="similarity">
    <text evidence="18">Belongs to the potyviridae genome polyprotein family.</text>
</comment>
<protein>
    <recommendedName>
        <fullName>Genome polyprotein</fullName>
    </recommendedName>
    <component>
        <recommendedName>
            <fullName>P1 protease</fullName>
            <ecNumber>3.4.21.-</ecNumber>
        </recommendedName>
        <alternativeName>
            <fullName>Leader protease P1</fullName>
        </alternativeName>
        <alternativeName>
            <fullName>N-terminal protein</fullName>
        </alternativeName>
        <alternativeName>
            <fullName evidence="14">P1 proteinase</fullName>
        </alternativeName>
    </component>
    <component>
        <recommendedName>
            <fullName evidence="13">Helper component proteinase</fullName>
            <shortName evidence="13">HC-pro</shortName>
            <ecNumber evidence="2 13">3.4.22.45</ecNumber>
        </recommendedName>
    </component>
    <component>
        <recommendedName>
            <fullName>Protein P3</fullName>
        </recommendedName>
    </component>
    <component>
        <recommendedName>
            <fullName>6 kDa protein 1</fullName>
            <shortName>6K1</shortName>
        </recommendedName>
    </component>
    <component>
        <recommendedName>
            <fullName>Cytoplasmic inclusion protein</fullName>
            <shortName>CI</shortName>
            <ecNumber>3.6.4.-</ecNumber>
        </recommendedName>
    </component>
    <component>
        <recommendedName>
            <fullName>6 kDa protein 2</fullName>
            <shortName>6K2</shortName>
        </recommendedName>
    </component>
    <component>
        <recommendedName>
            <fullName>Viral genome-linked protein</fullName>
        </recommendedName>
        <alternativeName>
            <fullName>VPg</fullName>
        </alternativeName>
    </component>
    <component>
        <recommendedName>
            <fullName>Nuclear inclusion protein A</fullName>
            <shortName>NI-a</shortName>
            <shortName>NIa</shortName>
            <ecNumber>3.4.22.44</ecNumber>
        </recommendedName>
        <alternativeName>
            <fullName>49 kDa proteinase</fullName>
            <shortName>49 kDa-Pro</shortName>
        </alternativeName>
        <alternativeName>
            <fullName>NIa-pro</fullName>
        </alternativeName>
    </component>
    <component>
        <recommendedName>
            <fullName>Nuclear inclusion protein B</fullName>
            <shortName>NI-b</shortName>
            <shortName>NIb</shortName>
            <ecNumber evidence="9">2.7.7.48</ecNumber>
        </recommendedName>
        <alternativeName>
            <fullName evidence="9">RNA-directed RNA polymerase</fullName>
        </alternativeName>
    </component>
    <component>
        <recommendedName>
            <fullName>Capsid protein</fullName>
            <shortName>CP</shortName>
        </recommendedName>
        <alternativeName>
            <fullName>Coat protein</fullName>
        </alternativeName>
    </component>
</protein>
<proteinExistence type="evidence at protein level"/>
<reference key="1">
    <citation type="journal article" date="1996" name="Arch. Virol.">
        <title>The complete nucleotide sequence of turnip mosaic virus RNA Japanese strain.</title>
        <authorList>
            <person name="Ohshima K."/>
            <person name="Tanaka M."/>
            <person name="Sako N."/>
        </authorList>
    </citation>
    <scope>NUCLEOTIDE SEQUENCE [GENOMIC RNA]</scope>
    <scope>VARIANTS</scope>
</reference>
<reference key="2">
    <citation type="journal article" date="2000" name="Mol. Plant Microbe Interact.">
        <title>The cylindrical inclusion gene of Turnip mosaic virus encodes a pathogenic determinant to the Brassica resistance gene TuRB01.</title>
        <authorList>
            <person name="Jenner C.E."/>
            <person name="Sanchez F."/>
            <person name="Nettleship S.B."/>
            <person name="Foster G.D."/>
            <person name="Ponz F."/>
            <person name="Walsh J.A."/>
        </authorList>
    </citation>
    <scope>NUCLEOTIDE SEQUENCE [LARGE SCALE GENOMIC DNA]</scope>
    <source>
        <strain>UK1</strain>
    </source>
</reference>
<reference key="3">
    <citation type="journal article" date="2001" name="Virus Res.">
        <title>Potyvirus proteins: a wealth of functions.</title>
        <authorList>
            <person name="Urcuqui-Inchima S."/>
            <person name="Haenni A.L."/>
            <person name="Bernardi F."/>
        </authorList>
    </citation>
    <scope>REVIEW</scope>
</reference>
<reference key="4">
    <citation type="journal article" date="2015" name="J. Virol.">
        <title>The vesicle-forming 6K2 protein of turnip mosaic virus interacts with the COPII coatomer Sec24a for viral systemic infection.</title>
        <authorList>
            <person name="Jiang J."/>
            <person name="Patarroyo C."/>
            <person name="Garcia Cabanillas D."/>
            <person name="Zheng H."/>
            <person name="Laliberte J.-F."/>
        </authorList>
    </citation>
    <scope>FUNCTION (NUCLEAR INCLUSION PROTEIN B)</scope>
    <scope>FUNCTION (6 KDA PROTEIN 2)</scope>
    <scope>INTERACTION WITH ARABIDOPSIS THALIANA SEC24A (6 KDA PROTEIN 2)</scope>
    <scope>SUBCELLULAR LOCATION (6 KDA PROTEIN 2)</scope>
    <scope>SUBCELLULAR LOCATION (6 KDA PROTEIN 1)</scope>
    <scope>MUTAGENESIS OF 1872-ASN--LYS-1888; LYS-1885; TRP-1886; LYS-1888 AND 2710-GLY--ASP-2712</scope>
</reference>
<reference key="5">
    <citation type="journal article" date="2021" name="PLoS ONE">
        <title>Analysis of proteolytic processing sites in potyvirus polyproteins revealed differential amino acid preferences of NIa-Pro protease in each of seven cleavage sites.</title>
        <authorList>
            <person name="Goh C.J."/>
            <person name="Hahn Y."/>
        </authorList>
    </citation>
    <scope>PROTEOLYTIC CLEAVAGE (GENOME POLYPROTEIN)</scope>
</reference>
<reference key="6">
    <citation type="journal article" date="2022" name="Viruses">
        <title>The Potyviral Protein 6K1 Reduces Plant Proteases Activity during Turnip mosaic virus Infection.</title>
        <authorList>
            <person name="Bera S."/>
            <person name="Arena G.D."/>
            <person name="Ray S."/>
            <person name="Flannigan S."/>
            <person name="Casteel C.L."/>
        </authorList>
    </citation>
    <scope>FUNCTION (6 KDA PROTEIN 1)</scope>
</reference>
<reference evidence="21" key="7">
    <citation type="journal article" date="2011" name="J. Biol. Chem.">
        <title>Structure of the autocatalytic cysteine protease domain of potyvirus helper-component proteinase.</title>
        <authorList>
            <person name="Guo B."/>
            <person name="Lin J."/>
            <person name="Ye K."/>
        </authorList>
    </citation>
    <scope>X-RAY CRYSTALLOGRAPHY (2.0 ANGSTROMS) OF 663-820</scope>
</reference>
<feature type="chain" id="PRO_0000420029" description="Genome polyprotein">
    <location>
        <begin position="1"/>
        <end position="3164"/>
    </location>
</feature>
<feature type="chain" id="PRO_0000040463" description="P1 protease" evidence="8">
    <location>
        <begin position="1"/>
        <end position="362"/>
    </location>
</feature>
<feature type="chain" id="PRO_0000040464" description="Helper component proteinase" evidence="8">
    <location>
        <begin position="363"/>
        <end position="820"/>
    </location>
</feature>
<feature type="chain" id="PRO_0000040465" description="Protein P3" evidence="1">
    <location>
        <begin position="821"/>
        <end position="1175"/>
    </location>
</feature>
<feature type="chain" id="PRO_0000040466" description="6 kDa protein 1" evidence="1">
    <location>
        <begin position="1176"/>
        <end position="1227"/>
    </location>
</feature>
<feature type="chain" id="PRO_0000040467" description="Cytoplasmic inclusion protein" evidence="1">
    <location>
        <begin position="1228"/>
        <end position="1871"/>
    </location>
</feature>
<feature type="chain" id="PRO_0000040468" description="6 kDa protein 2" evidence="1">
    <location>
        <begin position="1872"/>
        <end position="1924"/>
    </location>
</feature>
<feature type="chain" id="PRO_0000040469" description="Viral genome-linked protein" evidence="1">
    <location>
        <begin position="1925"/>
        <end position="2116"/>
    </location>
</feature>
<feature type="chain" id="PRO_0000040470" description="Nuclear inclusion protein A" evidence="1">
    <location>
        <begin position="2117"/>
        <end position="2359"/>
    </location>
</feature>
<feature type="chain" id="PRO_0000040471" description="Nuclear inclusion protein B" evidence="1">
    <location>
        <begin position="2360"/>
        <end position="2876"/>
    </location>
</feature>
<feature type="chain" id="PRO_0000040472" description="Capsid protein" evidence="1">
    <location>
        <begin position="2877"/>
        <end position="3164"/>
    </location>
</feature>
<feature type="topological domain" description="Cytoplasmic" evidence="18">
    <location>
        <begin position="1872"/>
        <end position="1889"/>
    </location>
</feature>
<feature type="transmembrane region" description="Helical" evidence="8">
    <location>
        <begin position="1890"/>
        <end position="1910"/>
    </location>
</feature>
<feature type="topological domain" description="Lumenal" evidence="18">
    <location>
        <begin position="1911"/>
        <end position="1924"/>
    </location>
</feature>
<feature type="domain" description="Peptidase S30" evidence="14">
    <location>
        <begin position="219"/>
        <end position="362"/>
    </location>
</feature>
<feature type="domain" description="Peptidase C6" evidence="13">
    <location>
        <begin position="698"/>
        <end position="820"/>
    </location>
</feature>
<feature type="domain" description="Helicase ATP-binding" evidence="10">
    <location>
        <begin position="1300"/>
        <end position="1452"/>
    </location>
</feature>
<feature type="domain" description="Helicase C-terminal" evidence="11">
    <location>
        <begin position="1471"/>
        <end position="1630"/>
    </location>
</feature>
<feature type="domain" description="Peptidase C4" evidence="12">
    <location>
        <begin position="2117"/>
        <end position="2335"/>
    </location>
</feature>
<feature type="domain" description="RdRp catalytic" evidence="9">
    <location>
        <begin position="2601"/>
        <end position="2725"/>
    </location>
</feature>
<feature type="region of interest" description="Disordered" evidence="15">
    <location>
        <begin position="2884"/>
        <end position="2935"/>
    </location>
</feature>
<feature type="short sequence motif" description="Involved in interaction with stylet and aphid transmission" evidence="1">
    <location>
        <begin position="414"/>
        <end position="417"/>
    </location>
</feature>
<feature type="short sequence motif" description="Involved in virions binding and aphid transmission" evidence="1">
    <location>
        <begin position="672"/>
        <end position="674"/>
    </location>
</feature>
<feature type="short sequence motif" description="DEAH box" evidence="10">
    <location>
        <begin position="1402"/>
        <end position="1405"/>
    </location>
</feature>
<feature type="short sequence motif" description="Nuclear localization signal" evidence="8">
    <location>
        <begin position="1965"/>
        <end position="1972"/>
    </location>
</feature>
<feature type="compositionally biased region" description="Basic and acidic residues" evidence="15">
    <location>
        <begin position="2887"/>
        <end position="2931"/>
    </location>
</feature>
<feature type="active site" description="For P1 proteinase activity" evidence="14">
    <location>
        <position position="270"/>
    </location>
</feature>
<feature type="active site" description="For P1 proteinase activity" evidence="14">
    <location>
        <position position="279"/>
    </location>
</feature>
<feature type="active site" description="For P1 proteinase activity" evidence="14">
    <location>
        <position position="313"/>
    </location>
</feature>
<feature type="active site" description="For helper component proteinase activity" evidence="13">
    <location>
        <position position="706"/>
    </location>
</feature>
<feature type="active site" description="For helper component proteinase activity" evidence="13">
    <location>
        <position position="779"/>
    </location>
</feature>
<feature type="active site" description="For nuclear inclusion protein A activity" evidence="12">
    <location>
        <position position="2162"/>
    </location>
</feature>
<feature type="active site" description="For nuclear inclusion protein A activity" evidence="12">
    <location>
        <position position="2197"/>
    </location>
</feature>
<feature type="active site" description="For nuclear inclusion protein A activity" evidence="12">
    <location>
        <position position="2267"/>
    </location>
</feature>
<feature type="binding site" evidence="10">
    <location>
        <begin position="1313"/>
        <end position="1320"/>
    </location>
    <ligand>
        <name>ATP</name>
        <dbReference type="ChEBI" id="CHEBI:30616"/>
    </ligand>
</feature>
<feature type="site" description="Cleavage; by P1 proteinase" evidence="14">
    <location>
        <begin position="362"/>
        <end position="363"/>
    </location>
</feature>
<feature type="site" description="Cleavage; by autolysis" evidence="13">
    <location>
        <begin position="820"/>
        <end position="821"/>
    </location>
</feature>
<feature type="site" description="Cleavage; by NIa-pro" evidence="19">
    <location>
        <begin position="1175"/>
        <end position="1176"/>
    </location>
</feature>
<feature type="site" description="Cleavage; by NIa-pro" evidence="19">
    <location>
        <begin position="1227"/>
        <end position="1228"/>
    </location>
</feature>
<feature type="site" description="Cleavage; by NIa-pro" evidence="19">
    <location>
        <begin position="1871"/>
        <end position="1872"/>
    </location>
</feature>
<feature type="site" description="Cleavage; by NIa-pro" evidence="19">
    <location>
        <begin position="1924"/>
        <end position="1925"/>
    </location>
</feature>
<feature type="site" description="Cleavage; by NIa-pro" evidence="19">
    <location>
        <begin position="2116"/>
        <end position="2117"/>
    </location>
</feature>
<feature type="site" description="Cleavage; by NIa-pro" evidence="19">
    <location>
        <begin position="2359"/>
        <end position="2360"/>
    </location>
</feature>
<feature type="site" description="Cleavage; by NIa-pro" evidence="19">
    <location>
        <begin position="2876"/>
        <end position="2877"/>
    </location>
</feature>
<feature type="modified residue" description="O-(5'-phospho-RNA)-tyrosine" evidence="3">
    <location>
        <position position="1987"/>
    </location>
</feature>
<feature type="modified residue" description="Phosphothreonine" evidence="5">
    <location>
        <position position="3147"/>
    </location>
</feature>
<feature type="sequence variant" evidence="20">
    <original>SAITNAIT</original>
    <variation>TAITNTTA</variation>
    <location>
        <begin position="8"/>
        <end position="15"/>
    </location>
</feature>
<feature type="sequence variant" evidence="20">
    <original>VQFGSFPPM</original>
    <variation>IQFGNFPPV</variation>
    <location>
        <begin position="24"/>
        <end position="32"/>
    </location>
</feature>
<feature type="sequence variant" evidence="20">
    <original>Y</original>
    <variation>H</variation>
    <location>
        <position position="52"/>
    </location>
</feature>
<feature type="sequence variant" evidence="20">
    <original>L</original>
    <variation>F</variation>
    <location>
        <position position="71"/>
    </location>
</feature>
<feature type="sequence variant" evidence="20">
    <original>S</original>
    <variation>P</variation>
    <location>
        <position position="100"/>
    </location>
</feature>
<feature type="sequence variant" evidence="20">
    <original>D</original>
    <variation>N</variation>
    <location>
        <position position="134"/>
    </location>
</feature>
<feature type="sequence variant" evidence="20">
    <original>H</original>
    <variation>R</variation>
    <location>
        <position position="142"/>
    </location>
</feature>
<feature type="sequence variant" evidence="20">
    <original>RAMKL</original>
    <variation>GAMKQ</variation>
    <location>
        <begin position="153"/>
        <end position="157"/>
    </location>
</feature>
<feature type="sequence variant" evidence="20">
    <original>VIEAEEV</original>
    <variation>AIEVEEA</variation>
    <location>
        <begin position="191"/>
        <end position="197"/>
    </location>
</feature>
<feature type="sequence variant" evidence="20">
    <original>KRTVHRI</original>
    <variation>RKTVHRR</variation>
    <location>
        <begin position="211"/>
        <end position="217"/>
    </location>
</feature>
<feature type="sequence variant" evidence="20">
    <original>VDMLTRSLVKIFKT</original>
    <variation>IDMLMRSLIKIFKA</variation>
    <location>
        <begin position="225"/>
        <end position="238"/>
    </location>
</feature>
<feature type="sequence variant" evidence="20">
    <original>YIGK</original>
    <variation>FIGR</variation>
    <location>
        <begin position="245"/>
        <end position="248"/>
    </location>
</feature>
<feature type="sequence variant" evidence="20">
    <original>IRKER</original>
    <variation>VKKEQ</variation>
    <location>
        <begin position="256"/>
        <end position="260"/>
    </location>
</feature>
<feature type="sequence variant" evidence="20">
    <original>IQVA</original>
    <variation>VQVV</variation>
    <location>
        <begin position="266"/>
        <end position="269"/>
    </location>
</feature>
<feature type="sequence variant" evidence="20">
    <original>L</original>
    <variation>S</variation>
    <location>
        <position position="281"/>
    </location>
</feature>
<feature type="sequence variant" evidence="20">
    <original>K</original>
    <variation>G</variation>
    <location>
        <position position="295"/>
    </location>
</feature>
<feature type="sequence variant" evidence="20">
    <original>GN</original>
    <variation>RD</variation>
    <location>
        <begin position="318"/>
        <end position="319"/>
    </location>
</feature>
<feature type="sequence variant" evidence="20">
    <original>V</original>
    <variation>I</variation>
    <location>
        <position position="351"/>
    </location>
</feature>
<feature type="sequence variant" evidence="20">
    <original>T</original>
    <variation>V</variation>
    <location>
        <position position="441"/>
    </location>
</feature>
<feature type="sequence variant" evidence="20">
    <original>S</original>
    <variation>R</variation>
    <location>
        <position position="469"/>
    </location>
</feature>
<feature type="sequence variant" evidence="20">
    <original>V</original>
    <variation>A</variation>
    <location>
        <position position="509"/>
    </location>
</feature>
<feature type="sequence variant" evidence="20">
    <original>A</original>
    <variation>V</variation>
    <location>
        <position position="602"/>
    </location>
</feature>
<feature type="sequence variant" evidence="20">
    <original>SSNIDN</original>
    <variation>AKNIDD</variation>
    <location>
        <begin position="830"/>
        <end position="835"/>
    </location>
</feature>
<feature type="sequence variant" evidence="20">
    <original>K</original>
    <variation>R</variation>
    <location>
        <position position="849"/>
    </location>
</feature>
<feature type="sequence variant" evidence="20">
    <original>E</original>
    <variation>D</variation>
    <location>
        <position position="925"/>
    </location>
</feature>
<feature type="sequence variant" evidence="20">
    <original>IEAKANVNGPDDAAT</original>
    <variation>VEARANINRPDDEAA</variation>
    <location>
        <begin position="932"/>
        <end position="946"/>
    </location>
</feature>
<feature type="sequence variant" evidence="20">
    <original>A</original>
    <variation>S</variation>
    <location>
        <position position="960"/>
    </location>
</feature>
<feature type="sequence variant" evidence="20">
    <original>I</original>
    <variation>T</variation>
    <location>
        <position position="989"/>
    </location>
</feature>
<feature type="sequence variant" evidence="20">
    <original>KSEA</original>
    <variation>RSEV</variation>
    <location>
        <begin position="1023"/>
        <end position="1026"/>
    </location>
</feature>
<feature type="sequence variant" evidence="20">
    <original>VSVMSSYERSKQCMKSVHSSIGNRLRSSM</original>
    <variation>ASVASSYEWSKQRVKSAYSRIGSRLRSGV</variation>
    <location>
        <begin position="1034"/>
        <end position="1062"/>
    </location>
</feature>
<feature type="sequence variant" evidence="20">
    <original>V</original>
    <variation>I</variation>
    <location>
        <position position="1081"/>
    </location>
</feature>
<feature type="sequence variant" evidence="20">
    <original>KFM</original>
    <variation>RFI</variation>
    <location>
        <begin position="1086"/>
        <end position="1088"/>
    </location>
</feature>
<feature type="sequence variant" evidence="20">
    <original>IKMTAEANH</original>
    <variation>VTIAAEANR</variation>
    <location>
        <begin position="1098"/>
        <end position="1106"/>
    </location>
</feature>
<feature type="sequence variant" evidence="20">
    <original>RA</original>
    <variation>ST</variation>
    <location>
        <begin position="1151"/>
        <end position="1152"/>
    </location>
</feature>
<feature type="sequence variant" evidence="20">
    <original>A</original>
    <variation>V</variation>
    <location>
        <position position="1171"/>
    </location>
</feature>
<feature type="sequence variant" evidence="20">
    <original>A</original>
    <variation>V</variation>
    <location>
        <position position="1176"/>
    </location>
</feature>
<feature type="sequence variant" evidence="20">
    <original>A</original>
    <variation>T</variation>
    <location>
        <position position="1259"/>
    </location>
</feature>
<feature type="sequence variant" evidence="20">
    <original>S</original>
    <variation>N</variation>
    <location>
        <position position="1268"/>
    </location>
</feature>
<feature type="sequence variant" evidence="20">
    <original>K</original>
    <variation>R</variation>
    <location>
        <position position="1348"/>
    </location>
</feature>
<feature type="sequence variant" evidence="20">
    <original>A</original>
    <variation>S</variation>
    <location>
        <position position="1368"/>
    </location>
</feature>
<feature type="sequence variant" evidence="20">
    <original>I</original>
    <variation>T</variation>
    <location>
        <position position="1497"/>
    </location>
</feature>
<feature type="sequence variant" evidence="20">
    <original>R</original>
    <variation>Q</variation>
    <location>
        <position position="1856"/>
    </location>
</feature>
<feature type="sequence variant" evidence="20">
    <original>M</original>
    <variation>L</variation>
    <location>
        <position position="1876"/>
    </location>
</feature>
<feature type="sequence variant" evidence="20">
    <original>M</original>
    <variation>I</variation>
    <location>
        <position position="1917"/>
    </location>
</feature>
<feature type="sequence variant" evidence="20">
    <original>NA</original>
    <variation>SI</variation>
    <location>
        <begin position="1938"/>
        <end position="1939"/>
    </location>
</feature>
<feature type="sequence variant" evidence="20">
    <original>I</original>
    <variation>L</variation>
    <location>
        <position position="1976"/>
    </location>
</feature>
<feature type="sequence variant" evidence="20">
    <original>LTDIT</original>
    <variation>FTDIA</variation>
    <location>
        <begin position="2013"/>
        <end position="2017"/>
    </location>
</feature>
<feature type="sequence variant" evidence="20">
    <original>SNEIRV</original>
    <variation>PNEVRM</variation>
    <location>
        <begin position="2038"/>
        <end position="2043"/>
    </location>
</feature>
<feature type="sequence variant" evidence="20">
    <original>V</original>
    <variation>I</variation>
    <location>
        <position position="2172"/>
    </location>
</feature>
<feature type="sequence variant" evidence="20">
    <original>S</original>
    <variation>A</variation>
    <location>
        <position position="2330"/>
    </location>
</feature>
<feature type="sequence variant" evidence="20">
    <original>V</original>
    <variation>I</variation>
    <location>
        <position position="2457"/>
    </location>
</feature>
<feature type="sequence variant" evidence="20">
    <original>V</original>
    <variation>I</variation>
    <location>
        <position position="2623"/>
    </location>
</feature>
<feature type="sequence variant" evidence="20">
    <original>I</original>
    <variation>V</variation>
    <location>
        <position position="2636"/>
    </location>
</feature>
<feature type="sequence variant" evidence="20">
    <original>A</original>
    <variation>T</variation>
    <location>
        <position position="2869"/>
    </location>
</feature>
<feature type="sequence variant" evidence="20">
    <original>K</original>
    <variation>R</variation>
    <location>
        <position position="2910"/>
    </location>
</feature>
<feature type="sequence variant" evidence="20">
    <original>DV</original>
    <variation>NA</variation>
    <location>
        <begin position="2919"/>
        <end position="2920"/>
    </location>
</feature>
<feature type="sequence variant" evidence="20">
    <original>KRDK</original>
    <variation>ERDN</variation>
    <location>
        <begin position="2926"/>
        <end position="2929"/>
    </location>
</feature>
<feature type="sequence variant" evidence="20">
    <original>K</original>
    <variation>Q</variation>
    <location>
        <position position="2958"/>
    </location>
</feature>
<feature type="sequence variant" evidence="20">
    <original>LLGVQ</original>
    <variation>GLGVK</variation>
    <location>
        <begin position="3158"/>
        <end position="3162"/>
    </location>
</feature>
<feature type="mutagenesis site" description="Reticulate pattern associated with retention in the host endoplasmic reticulum (ER) and impaired formation of host endoplasmic reticulum (ER)-derived viral vesicles." evidence="16">
    <location>
        <begin position="1872"/>
        <end position="1888"/>
    </location>
</feature>
<feature type="mutagenesis site" description="Partial retention in the host endoplasmic reticulum (ER); when associated with A-1888." evidence="16">
    <original>K</original>
    <variation>A</variation>
    <location>
        <position position="1885"/>
    </location>
</feature>
<feature type="mutagenesis site" description="Partial retention in the host endoplasmic reticulum (ER), reduced viral genome (vRNA) replication and abolished viral cell-to-cell movement in the host leading to impaired host plant systemic infection." evidence="16">
    <original>W</original>
    <variation>A</variation>
    <location>
        <position position="1886"/>
    </location>
</feature>
<feature type="mutagenesis site" description="Partial retention in the host endoplasmic reticulum (ER); when associated with A-1885." evidence="16">
    <original>K</original>
    <variation>A</variation>
    <location>
        <position position="1888"/>
    </location>
</feature>
<feature type="mutagenesis site" description="Defective viral replication." evidence="16">
    <original>GDD</original>
    <variation>VNN</variation>
    <location>
        <begin position="2710"/>
        <end position="2712"/>
    </location>
</feature>
<feature type="helix" evidence="22">
    <location>
        <begin position="708"/>
        <end position="714"/>
    </location>
</feature>
<feature type="helix" evidence="22">
    <location>
        <begin position="715"/>
        <end position="717"/>
    </location>
</feature>
<feature type="helix" evidence="22">
    <location>
        <begin position="720"/>
        <end position="722"/>
    </location>
</feature>
<feature type="helix" evidence="22">
    <location>
        <begin position="723"/>
        <end position="732"/>
    </location>
</feature>
<feature type="helix" evidence="22">
    <location>
        <begin position="734"/>
        <end position="738"/>
    </location>
</feature>
<feature type="helix" evidence="22">
    <location>
        <begin position="744"/>
        <end position="757"/>
    </location>
</feature>
<feature type="helix" evidence="22">
    <location>
        <begin position="759"/>
        <end position="763"/>
    </location>
</feature>
<feature type="strand" evidence="22">
    <location>
        <begin position="768"/>
        <end position="772"/>
    </location>
</feature>
<feature type="turn" evidence="22">
    <location>
        <begin position="773"/>
        <end position="776"/>
    </location>
</feature>
<feature type="strand" evidence="22">
    <location>
        <begin position="777"/>
        <end position="781"/>
    </location>
</feature>
<feature type="strand" evidence="22">
    <location>
        <begin position="784"/>
        <end position="786"/>
    </location>
</feature>
<feature type="strand" evidence="22">
    <location>
        <begin position="788"/>
        <end position="790"/>
    </location>
</feature>
<feature type="helix" evidence="22">
    <location>
        <begin position="799"/>
        <end position="807"/>
    </location>
</feature>
<feature type="strand" evidence="22">
    <location>
        <begin position="808"/>
        <end position="810"/>
    </location>
</feature>
<feature type="helix" evidence="22">
    <location>
        <begin position="813"/>
        <end position="816"/>
    </location>
</feature>
<feature type="strand" evidence="22">
    <location>
        <begin position="817"/>
        <end position="819"/>
    </location>
</feature>